<reference key="1">
    <citation type="journal article" date="2004" name="Genome Res.">
        <title>The status, quality, and expansion of the NIH full-length cDNA project: the Mammalian Gene Collection (MGC).</title>
        <authorList>
            <consortium name="The MGC Project Team"/>
        </authorList>
    </citation>
    <scope>NUCLEOTIDE SEQUENCE [LARGE SCALE MRNA]</scope>
    <source>
        <tissue>Brain</tissue>
    </source>
</reference>
<reference key="2">
    <citation type="submission" date="2007-07" db="UniProtKB">
        <authorList>
            <person name="Lubec G."/>
            <person name="Kang S.U."/>
        </authorList>
    </citation>
    <scope>PROTEIN SEQUENCE OF 276-285</scope>
    <scope>IDENTIFICATION BY MASS SPECTROMETRY</scope>
    <source>
        <strain>Sprague-Dawley</strain>
        <tissue>Brain</tissue>
    </source>
</reference>
<reference key="3">
    <citation type="journal article" date="1995" name="FEBS Lett.">
        <title>Molecular cloning of a human polypeptide related to yeast sds22, a regulator of protein phosphatase-1.</title>
        <authorList>
            <person name="Renouf S."/>
            <person name="Beullens M."/>
            <person name="Wera S."/>
            <person name="Van Eynde A."/>
            <person name="Sikela J."/>
            <person name="Stalmans W."/>
            <person name="Bollen M."/>
        </authorList>
    </citation>
    <scope>SUBCELLULAR LOCATION</scope>
</reference>
<reference key="4">
    <citation type="journal article" date="2002" name="Biochem. Cell Biol.">
        <title>Detection of multiple splice variants of the nuclear protein phosphatase 1 regulator sds22 in rat liver nuclei.</title>
        <authorList>
            <person name="Tran H.T."/>
            <person name="Bridges D."/>
            <person name="Ulke A."/>
            <person name="Moorhead G.B."/>
        </authorList>
    </citation>
    <scope>ALTERNATIVE SPLICING</scope>
    <scope>SUBCELLULAR LOCATION</scope>
    <source>
        <tissue>Liver</tissue>
    </source>
</reference>
<reference key="5">
    <citation type="journal article" date="2012" name="Nat. Commun.">
        <title>Quantitative maps of protein phosphorylation sites across 14 different rat organs and tissues.</title>
        <authorList>
            <person name="Lundby A."/>
            <person name="Secher A."/>
            <person name="Lage K."/>
            <person name="Nordsborg N.B."/>
            <person name="Dmytriyev A."/>
            <person name="Lundby C."/>
            <person name="Olsen J.V."/>
        </authorList>
    </citation>
    <scope>PHOSPHORYLATION [LARGE SCALE ANALYSIS] AT SER-12; SER-24; SER-27; SER-44; SER-47 AND SER-322</scope>
    <scope>IDENTIFICATION BY MASS SPECTROMETRY [LARGE SCALE ANALYSIS]</scope>
</reference>
<dbReference type="EMBL" id="BC088868">
    <property type="protein sequence ID" value="AAH88868.1"/>
    <property type="molecule type" value="mRNA"/>
</dbReference>
<dbReference type="RefSeq" id="NP_001009825.1">
    <molecule id="Q5HZV9-1"/>
    <property type="nucleotide sequence ID" value="NM_001009825.2"/>
</dbReference>
<dbReference type="SMR" id="Q5HZV9"/>
<dbReference type="BioGRID" id="257021">
    <property type="interactions" value="1"/>
</dbReference>
<dbReference type="FunCoup" id="Q5HZV9">
    <property type="interactions" value="1949"/>
</dbReference>
<dbReference type="IntAct" id="Q5HZV9">
    <property type="interactions" value="1"/>
</dbReference>
<dbReference type="STRING" id="10116.ENSRNOP00000022854"/>
<dbReference type="iPTMnet" id="Q5HZV9"/>
<dbReference type="PhosphoSitePlus" id="Q5HZV9"/>
<dbReference type="jPOST" id="Q5HZV9"/>
<dbReference type="PaxDb" id="10116-ENSRNOP00000022854"/>
<dbReference type="Ensembl" id="ENSRNOT00000095497.1">
    <molecule id="Q5HZV9-1"/>
    <property type="protein sequence ID" value="ENSRNOP00000081944.1"/>
    <property type="gene ID" value="ENSRNOG00000016974.8"/>
</dbReference>
<dbReference type="GeneID" id="301618"/>
<dbReference type="KEGG" id="rno:301618"/>
<dbReference type="UCSC" id="RGD:1308169">
    <molecule id="Q5HZV9-1"/>
    <property type="organism name" value="rat"/>
</dbReference>
<dbReference type="AGR" id="RGD:1308169"/>
<dbReference type="CTD" id="5510"/>
<dbReference type="RGD" id="1308169">
    <property type="gene designation" value="Ppp1r7"/>
</dbReference>
<dbReference type="eggNOG" id="KOG0531">
    <property type="taxonomic scope" value="Eukaryota"/>
</dbReference>
<dbReference type="GeneTree" id="ENSGT00940000158551"/>
<dbReference type="InParanoid" id="Q5HZV9"/>
<dbReference type="OrthoDB" id="66908at9989"/>
<dbReference type="PhylomeDB" id="Q5HZV9"/>
<dbReference type="TreeFam" id="TF105538"/>
<dbReference type="PRO" id="PR:Q5HZV9"/>
<dbReference type="Proteomes" id="UP000002494">
    <property type="component" value="Chromosome 9"/>
</dbReference>
<dbReference type="GO" id="GO:0005694">
    <property type="term" value="C:chromosome"/>
    <property type="evidence" value="ECO:0000266"/>
    <property type="project" value="RGD"/>
</dbReference>
<dbReference type="GO" id="GO:0005634">
    <property type="term" value="C:nucleus"/>
    <property type="evidence" value="ECO:0007669"/>
    <property type="project" value="UniProtKB-SubCell"/>
</dbReference>
<dbReference type="GO" id="GO:0019888">
    <property type="term" value="F:protein phosphatase regulator activity"/>
    <property type="evidence" value="ECO:0000266"/>
    <property type="project" value="RGD"/>
</dbReference>
<dbReference type="GO" id="GO:0007059">
    <property type="term" value="P:chromosome segregation"/>
    <property type="evidence" value="ECO:0000266"/>
    <property type="project" value="RGD"/>
</dbReference>
<dbReference type="FunFam" id="3.80.10.10:FF:000055">
    <property type="entry name" value="Protein phosphatase 1 regulatory subunit 7"/>
    <property type="match status" value="1"/>
</dbReference>
<dbReference type="FunFam" id="3.80.10.10:FF:000127">
    <property type="entry name" value="protein phosphatase 1 regulatory subunit 7 isoform X2"/>
    <property type="match status" value="1"/>
</dbReference>
<dbReference type="Gene3D" id="3.80.10.10">
    <property type="entry name" value="Ribonuclease Inhibitor"/>
    <property type="match status" value="2"/>
</dbReference>
<dbReference type="InterPro" id="IPR050576">
    <property type="entry name" value="Cilia_flagella_integrity"/>
</dbReference>
<dbReference type="InterPro" id="IPR001611">
    <property type="entry name" value="Leu-rich_rpt"/>
</dbReference>
<dbReference type="InterPro" id="IPR025875">
    <property type="entry name" value="Leu-rich_rpt_4"/>
</dbReference>
<dbReference type="InterPro" id="IPR003591">
    <property type="entry name" value="Leu-rich_rpt_typical-subtyp"/>
</dbReference>
<dbReference type="InterPro" id="IPR032675">
    <property type="entry name" value="LRR_dom_sf"/>
</dbReference>
<dbReference type="InterPro" id="IPR003603">
    <property type="entry name" value="U2A'_phosphoprotein32A_C"/>
</dbReference>
<dbReference type="PANTHER" id="PTHR45973:SF23">
    <property type="entry name" value="PROTEIN PHOSPHATASE 1 REGULATORY SUBUNIT 7"/>
    <property type="match status" value="1"/>
</dbReference>
<dbReference type="PANTHER" id="PTHR45973">
    <property type="entry name" value="PROTEIN PHOSPHATASE 1 REGULATORY SUBUNIT SDS22-RELATED"/>
    <property type="match status" value="1"/>
</dbReference>
<dbReference type="Pfam" id="PF12799">
    <property type="entry name" value="LRR_4"/>
    <property type="match status" value="3"/>
</dbReference>
<dbReference type="Pfam" id="PF14580">
    <property type="entry name" value="LRR_9"/>
    <property type="match status" value="1"/>
</dbReference>
<dbReference type="SMART" id="SM00365">
    <property type="entry name" value="LRR_SD22"/>
    <property type="match status" value="10"/>
</dbReference>
<dbReference type="SMART" id="SM00369">
    <property type="entry name" value="LRR_TYP"/>
    <property type="match status" value="7"/>
</dbReference>
<dbReference type="SMART" id="SM00446">
    <property type="entry name" value="LRRcap"/>
    <property type="match status" value="1"/>
</dbReference>
<dbReference type="SUPFAM" id="SSF52058">
    <property type="entry name" value="L domain-like"/>
    <property type="match status" value="1"/>
</dbReference>
<dbReference type="PROSITE" id="PS51450">
    <property type="entry name" value="LRR"/>
    <property type="match status" value="12"/>
</dbReference>
<organism>
    <name type="scientific">Rattus norvegicus</name>
    <name type="common">Rat</name>
    <dbReference type="NCBI Taxonomy" id="10116"/>
    <lineage>
        <taxon>Eukaryota</taxon>
        <taxon>Metazoa</taxon>
        <taxon>Chordata</taxon>
        <taxon>Craniata</taxon>
        <taxon>Vertebrata</taxon>
        <taxon>Euteleostomi</taxon>
        <taxon>Mammalia</taxon>
        <taxon>Eutheria</taxon>
        <taxon>Euarchontoglires</taxon>
        <taxon>Glires</taxon>
        <taxon>Rodentia</taxon>
        <taxon>Myomorpha</taxon>
        <taxon>Muroidea</taxon>
        <taxon>Muridae</taxon>
        <taxon>Murinae</taxon>
        <taxon>Rattus</taxon>
    </lineage>
</organism>
<protein>
    <recommendedName>
        <fullName>Protein phosphatase 1 regulatory subunit 7</fullName>
    </recommendedName>
    <alternativeName>
        <fullName>Protein phosphatase 1 regulatory subunit 22</fullName>
    </alternativeName>
</protein>
<name>PP1R7_RAT</name>
<accession>Q5HZV9</accession>
<comment type="function">
    <text evidence="1">Regulatory subunit of protein phosphatase 1.</text>
</comment>
<comment type="subunit">
    <text evidence="1">Interacts with PPP1CA, PPP1CB and PPP1CC/PPP1G.</text>
</comment>
<comment type="subcellular location">
    <subcellularLocation>
        <location evidence="4 5">Nucleus</location>
    </subcellularLocation>
</comment>
<comment type="alternative products">
    <event type="alternative splicing"/>
    <isoform>
        <id>Q5HZV9-1</id>
        <name>1</name>
        <sequence type="displayed"/>
    </isoform>
    <text>A number of isoforms are produced.</text>
</comment>
<comment type="similarity">
    <text evidence="6">Belongs to the SDS22 family.</text>
</comment>
<evidence type="ECO:0000250" key="1"/>
<evidence type="ECO:0000250" key="2">
    <source>
        <dbReference type="UniProtKB" id="Q15435"/>
    </source>
</evidence>
<evidence type="ECO:0000256" key="3">
    <source>
        <dbReference type="SAM" id="MobiDB-lite"/>
    </source>
</evidence>
<evidence type="ECO:0000269" key="4">
    <source>
    </source>
</evidence>
<evidence type="ECO:0000269" key="5">
    <source>
    </source>
</evidence>
<evidence type="ECO:0000305" key="6"/>
<evidence type="ECO:0007744" key="7">
    <source>
    </source>
</evidence>
<gene>
    <name type="primary">Ppp1r7</name>
    <name type="synonym">Sds22</name>
</gene>
<keyword id="KW-0007">Acetylation</keyword>
<keyword id="KW-0025">Alternative splicing</keyword>
<keyword id="KW-0903">Direct protein sequencing</keyword>
<keyword id="KW-0433">Leucine-rich repeat</keyword>
<keyword id="KW-0539">Nucleus</keyword>
<keyword id="KW-0597">Phosphoprotein</keyword>
<keyword id="KW-1185">Reference proteome</keyword>
<keyword id="KW-0677">Repeat</keyword>
<feature type="initiator methionine" description="Removed" evidence="2">
    <location>
        <position position="1"/>
    </location>
</feature>
<feature type="chain" id="PRO_0000239616" description="Protein phosphatase 1 regulatory subunit 7">
    <location>
        <begin position="2"/>
        <end position="360"/>
    </location>
</feature>
<feature type="repeat" description="LRR 1">
    <location>
        <begin position="77"/>
        <end position="98"/>
    </location>
</feature>
<feature type="repeat" description="LRR 2">
    <location>
        <begin position="99"/>
        <end position="120"/>
    </location>
</feature>
<feature type="repeat" description="LRR 3">
    <location>
        <begin position="121"/>
        <end position="142"/>
    </location>
</feature>
<feature type="repeat" description="LRR 4">
    <location>
        <begin position="143"/>
        <end position="164"/>
    </location>
</feature>
<feature type="repeat" description="LRR 5">
    <location>
        <begin position="165"/>
        <end position="186"/>
    </location>
</feature>
<feature type="repeat" description="LRR 6">
    <location>
        <begin position="187"/>
        <end position="208"/>
    </location>
</feature>
<feature type="repeat" description="LRR 7">
    <location>
        <begin position="209"/>
        <end position="230"/>
    </location>
</feature>
<feature type="repeat" description="LRR 8">
    <location>
        <begin position="231"/>
        <end position="252"/>
    </location>
</feature>
<feature type="repeat" description="LRR 9">
    <location>
        <begin position="253"/>
        <end position="274"/>
    </location>
</feature>
<feature type="repeat" description="LRR 10">
    <location>
        <begin position="275"/>
        <end position="296"/>
    </location>
</feature>
<feature type="repeat" description="LRR 11">
    <location>
        <begin position="297"/>
        <end position="318"/>
    </location>
</feature>
<feature type="domain" description="LRRCT">
    <location>
        <begin position="331"/>
        <end position="360"/>
    </location>
</feature>
<feature type="region of interest" description="Disordered" evidence="3">
    <location>
        <begin position="1"/>
        <end position="63"/>
    </location>
</feature>
<feature type="compositionally biased region" description="Basic and acidic residues" evidence="3">
    <location>
        <begin position="17"/>
        <end position="34"/>
    </location>
</feature>
<feature type="modified residue" description="N-acetylalanine" evidence="2">
    <location>
        <position position="2"/>
    </location>
</feature>
<feature type="modified residue" description="Phosphoserine" evidence="7">
    <location>
        <position position="12"/>
    </location>
</feature>
<feature type="modified residue" description="Phosphoserine" evidence="7">
    <location>
        <position position="24"/>
    </location>
</feature>
<feature type="modified residue" description="Phosphoserine" evidence="7">
    <location>
        <position position="27"/>
    </location>
</feature>
<feature type="modified residue" description="Phosphoserine" evidence="7">
    <location>
        <position position="44"/>
    </location>
</feature>
<feature type="modified residue" description="Phosphoserine" evidence="7">
    <location>
        <position position="47"/>
    </location>
</feature>
<feature type="modified residue" description="Phosphoserine" evidence="7">
    <location>
        <position position="322"/>
    </location>
</feature>
<proteinExistence type="evidence at protein level"/>
<sequence>MAAERGAGQQQSQEMMEVDRRVESEESGDEEGKKHGGGIVADLSQQSLKDGVERGAEDPEEEHELAVDMETISLDRDAEDVDLNHYRIGKIEGFEVLKKVKSLCLRQNLIKCIENLDELQSLRELDLYDNQIKKIENLEALTELEVLDISFNLLRNIEGIDKLTQLKKLFLVNNKINKIENISTLQQLQMLELGSNRIRAIENIDTLTNLESLFLGKNKITKLQNLDALSNLTVLSMQSNRLTKIEGLQNLVNLRELYLSHNGIEVIEGLENNNKLTMLDIASNRIKKIENISHLTELQEFWMNDNLLESWSDLDELKGARSLETVYLERNPLQKDPQYRRKVMLALPSVRQIDATFVRF</sequence>